<organism>
    <name type="scientific">Shewanella denitrificans (strain OS217 / ATCC BAA-1090 / DSM 15013)</name>
    <dbReference type="NCBI Taxonomy" id="318161"/>
    <lineage>
        <taxon>Bacteria</taxon>
        <taxon>Pseudomonadati</taxon>
        <taxon>Pseudomonadota</taxon>
        <taxon>Gammaproteobacteria</taxon>
        <taxon>Alteromonadales</taxon>
        <taxon>Shewanellaceae</taxon>
        <taxon>Shewanella</taxon>
    </lineage>
</organism>
<keyword id="KW-0997">Cell inner membrane</keyword>
<keyword id="KW-1003">Cell membrane</keyword>
<keyword id="KW-0407">Ion channel</keyword>
<keyword id="KW-0406">Ion transport</keyword>
<keyword id="KW-0472">Membrane</keyword>
<keyword id="KW-0479">Metal-binding</keyword>
<keyword id="KW-1185">Reference proteome</keyword>
<keyword id="KW-0915">Sodium</keyword>
<keyword id="KW-0812">Transmembrane</keyword>
<keyword id="KW-1133">Transmembrane helix</keyword>
<keyword id="KW-0813">Transport</keyword>
<dbReference type="EMBL" id="CP000302">
    <property type="protein sequence ID" value="ABE55030.1"/>
    <property type="molecule type" value="Genomic_DNA"/>
</dbReference>
<dbReference type="RefSeq" id="WP_011496187.1">
    <property type="nucleotide sequence ID" value="NC_007954.1"/>
</dbReference>
<dbReference type="SMR" id="Q12NE6"/>
<dbReference type="STRING" id="318161.Sden_1746"/>
<dbReference type="KEGG" id="sdn:Sden_1746"/>
<dbReference type="eggNOG" id="COG0239">
    <property type="taxonomic scope" value="Bacteria"/>
</dbReference>
<dbReference type="HOGENOM" id="CLU_114342_3_0_6"/>
<dbReference type="OrthoDB" id="9806299at2"/>
<dbReference type="Proteomes" id="UP000001982">
    <property type="component" value="Chromosome"/>
</dbReference>
<dbReference type="GO" id="GO:0005886">
    <property type="term" value="C:plasma membrane"/>
    <property type="evidence" value="ECO:0007669"/>
    <property type="project" value="UniProtKB-SubCell"/>
</dbReference>
<dbReference type="GO" id="GO:0062054">
    <property type="term" value="F:fluoride channel activity"/>
    <property type="evidence" value="ECO:0007669"/>
    <property type="project" value="UniProtKB-UniRule"/>
</dbReference>
<dbReference type="GO" id="GO:0046872">
    <property type="term" value="F:metal ion binding"/>
    <property type="evidence" value="ECO:0007669"/>
    <property type="project" value="UniProtKB-KW"/>
</dbReference>
<dbReference type="GO" id="GO:0140114">
    <property type="term" value="P:cellular detoxification of fluoride"/>
    <property type="evidence" value="ECO:0007669"/>
    <property type="project" value="UniProtKB-UniRule"/>
</dbReference>
<dbReference type="HAMAP" id="MF_00454">
    <property type="entry name" value="FluC"/>
    <property type="match status" value="1"/>
</dbReference>
<dbReference type="InterPro" id="IPR003691">
    <property type="entry name" value="FluC"/>
</dbReference>
<dbReference type="NCBIfam" id="TIGR00494">
    <property type="entry name" value="crcB"/>
    <property type="match status" value="1"/>
</dbReference>
<dbReference type="PANTHER" id="PTHR28259">
    <property type="entry name" value="FLUORIDE EXPORT PROTEIN 1-RELATED"/>
    <property type="match status" value="1"/>
</dbReference>
<dbReference type="PANTHER" id="PTHR28259:SF1">
    <property type="entry name" value="FLUORIDE EXPORT PROTEIN 1-RELATED"/>
    <property type="match status" value="1"/>
</dbReference>
<dbReference type="Pfam" id="PF02537">
    <property type="entry name" value="CRCB"/>
    <property type="match status" value="1"/>
</dbReference>
<sequence>MTNLLFVALGGSIGAVLRYLMSIIMIQLFGSSFPFGTLLVNVLGSFFMGIVYALGQVSHVSPELKALVGVGLLGALTTFSTFSNETLLLMQQGYWFKSLINVLLNVSLCIFMVYLGQQLVFSRV</sequence>
<comment type="function">
    <text evidence="1">Fluoride-specific ion channel. Important for reducing fluoride concentration in the cell, thus reducing its toxicity.</text>
</comment>
<comment type="catalytic activity">
    <reaction evidence="1">
        <text>fluoride(in) = fluoride(out)</text>
        <dbReference type="Rhea" id="RHEA:76159"/>
        <dbReference type="ChEBI" id="CHEBI:17051"/>
    </reaction>
    <physiologicalReaction direction="left-to-right" evidence="1">
        <dbReference type="Rhea" id="RHEA:76160"/>
    </physiologicalReaction>
</comment>
<comment type="activity regulation">
    <text evidence="1">Na(+) is not transported, but it plays an essential structural role and its presence is essential for fluoride channel function.</text>
</comment>
<comment type="subcellular location">
    <subcellularLocation>
        <location evidence="1">Cell inner membrane</location>
        <topology evidence="1">Multi-pass membrane protein</topology>
    </subcellularLocation>
</comment>
<comment type="similarity">
    <text evidence="1">Belongs to the fluoride channel Fluc/FEX (TC 1.A.43) family.</text>
</comment>
<evidence type="ECO:0000255" key="1">
    <source>
        <dbReference type="HAMAP-Rule" id="MF_00454"/>
    </source>
</evidence>
<name>FLUC_SHEDO</name>
<proteinExistence type="inferred from homology"/>
<feature type="chain" id="PRO_1000026415" description="Fluoride-specific ion channel FluC">
    <location>
        <begin position="1"/>
        <end position="124"/>
    </location>
</feature>
<feature type="transmembrane region" description="Helical" evidence="1">
    <location>
        <begin position="4"/>
        <end position="24"/>
    </location>
</feature>
<feature type="transmembrane region" description="Helical" evidence="1">
    <location>
        <begin position="35"/>
        <end position="55"/>
    </location>
</feature>
<feature type="transmembrane region" description="Helical" evidence="1">
    <location>
        <begin position="62"/>
        <end position="82"/>
    </location>
</feature>
<feature type="transmembrane region" description="Helical" evidence="1">
    <location>
        <begin position="95"/>
        <end position="115"/>
    </location>
</feature>
<feature type="binding site" evidence="1">
    <location>
        <position position="74"/>
    </location>
    <ligand>
        <name>Na(+)</name>
        <dbReference type="ChEBI" id="CHEBI:29101"/>
        <note>structural</note>
    </ligand>
</feature>
<feature type="binding site" evidence="1">
    <location>
        <position position="77"/>
    </location>
    <ligand>
        <name>Na(+)</name>
        <dbReference type="ChEBI" id="CHEBI:29101"/>
        <note>structural</note>
    </ligand>
</feature>
<gene>
    <name evidence="1" type="primary">fluC</name>
    <name evidence="1" type="synonym">crcB</name>
    <name type="ordered locus">Sden_1746</name>
</gene>
<protein>
    <recommendedName>
        <fullName evidence="1">Fluoride-specific ion channel FluC</fullName>
    </recommendedName>
</protein>
<reference key="1">
    <citation type="submission" date="2006-03" db="EMBL/GenBank/DDBJ databases">
        <title>Complete sequence of Shewanella denitrificans OS217.</title>
        <authorList>
            <consortium name="US DOE Joint Genome Institute"/>
            <person name="Copeland A."/>
            <person name="Lucas S."/>
            <person name="Lapidus A."/>
            <person name="Barry K."/>
            <person name="Detter J.C."/>
            <person name="Glavina del Rio T."/>
            <person name="Hammon N."/>
            <person name="Israni S."/>
            <person name="Dalin E."/>
            <person name="Tice H."/>
            <person name="Pitluck S."/>
            <person name="Brettin T."/>
            <person name="Bruce D."/>
            <person name="Han C."/>
            <person name="Tapia R."/>
            <person name="Gilna P."/>
            <person name="Kiss H."/>
            <person name="Schmutz J."/>
            <person name="Larimer F."/>
            <person name="Land M."/>
            <person name="Hauser L."/>
            <person name="Kyrpides N."/>
            <person name="Lykidis A."/>
            <person name="Richardson P."/>
        </authorList>
    </citation>
    <scope>NUCLEOTIDE SEQUENCE [LARGE SCALE GENOMIC DNA]</scope>
    <source>
        <strain>OS217 / ATCC BAA-1090 / DSM 15013</strain>
    </source>
</reference>
<accession>Q12NE6</accession>